<keyword id="KW-0325">Glycoprotein</keyword>
<keyword id="KW-0472">Membrane</keyword>
<keyword id="KW-0532">Neurotransmitter transport</keyword>
<keyword id="KW-0812">Transmembrane</keyword>
<keyword id="KW-1133">Transmembrane helix</keyword>
<keyword id="KW-0813">Transport</keyword>
<reference key="1">
    <citation type="journal article" date="2000" name="J. Neurochem.">
        <title>Modification of cysteines reveals linkage to acetylcholine and vesamicol binding sites in the vesicular acetylcholine transporter of Torpedo californica.</title>
        <authorList>
            <person name="Keller J.E."/>
            <person name="Bravo D.T."/>
            <person name="Parsons S.M."/>
        </authorList>
    </citation>
    <scope>NUCLEOTIDE SEQUENCE [MRNA]</scope>
    <scope>IMPORTANCE OF CYS RESIDUES</scope>
</reference>
<reference key="2">
    <citation type="journal article" date="1994" name="Proc. Natl. Acad. Sci. U.S.A.">
        <title>Molecular cloning of a putative vesicular transporter for acetylcholine.</title>
        <authorList>
            <person name="Roghani A."/>
            <person name="Feldman J."/>
            <person name="Kohan S.A."/>
            <person name="Shirzadi A."/>
            <person name="Gundersen C.B."/>
            <person name="Brecha N."/>
            <person name="Edwards R.H."/>
        </authorList>
    </citation>
    <scope>NUCLEOTIDE SEQUENCE [MRNA] OF 50-410</scope>
    <scope>TISSUE SPECIFICITY</scope>
    <source>
        <tissue>Electric lobe</tissue>
    </source>
</reference>
<organism>
    <name type="scientific">Tetronarce californica</name>
    <name type="common">Pacific electric ray</name>
    <name type="synonym">Torpedo californica</name>
    <dbReference type="NCBI Taxonomy" id="7787"/>
    <lineage>
        <taxon>Eukaryota</taxon>
        <taxon>Metazoa</taxon>
        <taxon>Chordata</taxon>
        <taxon>Craniata</taxon>
        <taxon>Vertebrata</taxon>
        <taxon>Chondrichthyes</taxon>
        <taxon>Elasmobranchii</taxon>
        <taxon>Batoidea</taxon>
        <taxon>Torpediniformes</taxon>
        <taxon>Torpedinidae</taxon>
        <taxon>Tetronarce</taxon>
    </lineage>
</organism>
<proteinExistence type="evidence at transcript level"/>
<accession>P81721</accession>
<accession>Q9PW50</accession>
<sequence length="515" mass="56110">MGVTMAVGLAKAAMGKISSAIGERSKRISGAMNEPRRKRKILLVIVCIAMLLDNMLYMVIVPIIPNYLETIRTYKLVYITTPSNGTNGSLLNSTQRAVLERNPNANEDIQIGVLFASKAILQLLSNPFTGTFIDRVGYDIPLLIGLTIMFFSTITFAFGESYAVLFAARSLQGLGSAFADTSGIAMIADKYTEESERTQALGIALAFISFGSLVAPPFGGVLYQFAGKWVPFLVLSFVCLLDGILLLMVVTPFASRTRENMLQGTPIYKLMIDPYIAVVAGALTTCNIPLAFLEPTISNWMKKTMNASEWQMGITWLPAFFPHILGVYITVKLAAKYPNYQWFYGAVGLVIIGASSCTIPACRNFEELIIPLCALCFGIALVDTALLPTLAFLVDIRYVSVYGSVYAIADISYSVAYALGPIMAGQIVHDLGFVQLNLGMGLVNILYAPALLFLRNVCQMKPSLSERNILLEEGPKGLYDTIIMEERKAAKEPHGSSSGNHSVHAVLSDQEGYSE</sequence>
<dbReference type="EMBL" id="AF172824">
    <property type="protein sequence ID" value="AAD50292.1"/>
    <property type="molecule type" value="mRNA"/>
</dbReference>
<dbReference type="SMR" id="P81721"/>
<dbReference type="BindingDB" id="P81721"/>
<dbReference type="ChEMBL" id="CHEMBL3313"/>
<dbReference type="GO" id="GO:0030121">
    <property type="term" value="C:AP-1 adaptor complex"/>
    <property type="evidence" value="ECO:0007669"/>
    <property type="project" value="TreeGrafter"/>
</dbReference>
<dbReference type="GO" id="GO:0030122">
    <property type="term" value="C:AP-2 adaptor complex"/>
    <property type="evidence" value="ECO:0007669"/>
    <property type="project" value="TreeGrafter"/>
</dbReference>
<dbReference type="GO" id="GO:0043195">
    <property type="term" value="C:terminal bouton"/>
    <property type="evidence" value="ECO:0007669"/>
    <property type="project" value="TreeGrafter"/>
</dbReference>
<dbReference type="GO" id="GO:0005277">
    <property type="term" value="F:acetylcholine transmembrane transporter activity"/>
    <property type="evidence" value="ECO:0007669"/>
    <property type="project" value="TreeGrafter"/>
</dbReference>
<dbReference type="GO" id="GO:0007268">
    <property type="term" value="P:chemical synaptic transmission"/>
    <property type="evidence" value="ECO:0007669"/>
    <property type="project" value="TreeGrafter"/>
</dbReference>
<dbReference type="CDD" id="cd17383">
    <property type="entry name" value="MFS_SLC18A3_VAChT"/>
    <property type="match status" value="1"/>
</dbReference>
<dbReference type="FunFam" id="1.20.1250.20:FF:000109">
    <property type="entry name" value="Putative vesicular acetylcholine transporter"/>
    <property type="match status" value="1"/>
</dbReference>
<dbReference type="Gene3D" id="1.20.1250.20">
    <property type="entry name" value="MFS general substrate transporter like domains"/>
    <property type="match status" value="1"/>
</dbReference>
<dbReference type="InterPro" id="IPR011701">
    <property type="entry name" value="MFS"/>
</dbReference>
<dbReference type="InterPro" id="IPR020846">
    <property type="entry name" value="MFS_dom"/>
</dbReference>
<dbReference type="InterPro" id="IPR036259">
    <property type="entry name" value="MFS_trans_sf"/>
</dbReference>
<dbReference type="InterPro" id="IPR050930">
    <property type="entry name" value="MFS_Vesicular_Transporter"/>
</dbReference>
<dbReference type="PANTHER" id="PTHR23506">
    <property type="entry name" value="GH10249P"/>
    <property type="match status" value="1"/>
</dbReference>
<dbReference type="PANTHER" id="PTHR23506:SF13">
    <property type="entry name" value="VESICULAR ACETYLCHOLINE TRANSPORTER"/>
    <property type="match status" value="1"/>
</dbReference>
<dbReference type="Pfam" id="PF07690">
    <property type="entry name" value="MFS_1"/>
    <property type="match status" value="1"/>
</dbReference>
<dbReference type="SUPFAM" id="SSF103473">
    <property type="entry name" value="MFS general substrate transporter"/>
    <property type="match status" value="1"/>
</dbReference>
<dbReference type="PROSITE" id="PS50850">
    <property type="entry name" value="MFS"/>
    <property type="match status" value="1"/>
</dbReference>
<feature type="chain" id="PRO_0000127522" description="Vesicular acetylcholine transporter">
    <location>
        <begin position="1"/>
        <end position="515"/>
    </location>
</feature>
<feature type="topological domain" description="Cytoplasmic" evidence="2">
    <location>
        <begin position="1"/>
        <end position="40"/>
    </location>
</feature>
<feature type="transmembrane region" description="Helical" evidence="2">
    <location>
        <begin position="41"/>
        <end position="61"/>
    </location>
</feature>
<feature type="topological domain" description="Lumenal, vesicle" evidence="2">
    <location>
        <begin position="62"/>
        <end position="112"/>
    </location>
</feature>
<feature type="transmembrane region" description="Helical" evidence="2">
    <location>
        <begin position="113"/>
        <end position="133"/>
    </location>
</feature>
<feature type="topological domain" description="Cytoplasmic" evidence="2">
    <location>
        <begin position="134"/>
        <end position="139"/>
    </location>
</feature>
<feature type="transmembrane region" description="Helical" evidence="2">
    <location>
        <begin position="140"/>
        <end position="160"/>
    </location>
</feature>
<feature type="topological domain" description="Lumenal, vesicle" evidence="2">
    <location>
        <begin position="161"/>
        <end position="169"/>
    </location>
</feature>
<feature type="transmembrane region" description="Helical" evidence="2">
    <location>
        <begin position="170"/>
        <end position="190"/>
    </location>
</feature>
<feature type="topological domain" description="Cytoplasmic" evidence="2">
    <location>
        <begin position="191"/>
        <end position="201"/>
    </location>
</feature>
<feature type="transmembrane region" description="Helical" evidence="2">
    <location>
        <begin position="202"/>
        <end position="222"/>
    </location>
</feature>
<feature type="topological domain" description="Lumenal, vesicle" evidence="2">
    <location>
        <begin position="223"/>
        <end position="229"/>
    </location>
</feature>
<feature type="transmembrane region" description="Helical" evidence="2">
    <location>
        <begin position="230"/>
        <end position="250"/>
    </location>
</feature>
<feature type="topological domain" description="Cytoplasmic" evidence="2">
    <location>
        <begin position="251"/>
        <end position="271"/>
    </location>
</feature>
<feature type="transmembrane region" description="Helical" evidence="2">
    <location>
        <begin position="272"/>
        <end position="292"/>
    </location>
</feature>
<feature type="topological domain" description="Lumenal, vesicle" evidence="2">
    <location>
        <begin position="293"/>
        <end position="310"/>
    </location>
</feature>
<feature type="transmembrane region" description="Helical" evidence="2">
    <location>
        <begin position="311"/>
        <end position="331"/>
    </location>
</feature>
<feature type="topological domain" description="Cytoplasmic" evidence="2">
    <location>
        <begin position="332"/>
        <end position="341"/>
    </location>
</feature>
<feature type="transmembrane region" description="Helical" evidence="2">
    <location>
        <begin position="342"/>
        <end position="362"/>
    </location>
</feature>
<feature type="topological domain" description="Lumenal, vesicle" evidence="2">
    <location>
        <begin position="363"/>
        <end position="367"/>
    </location>
</feature>
<feature type="transmembrane region" description="Helical" evidence="2">
    <location>
        <begin position="368"/>
        <end position="388"/>
    </location>
</feature>
<feature type="topological domain" description="Cytoplasmic" evidence="2">
    <location>
        <begin position="389"/>
        <end position="404"/>
    </location>
</feature>
<feature type="transmembrane region" description="Helical" evidence="2">
    <location>
        <begin position="405"/>
        <end position="425"/>
    </location>
</feature>
<feature type="topological domain" description="Lumenal, vesicle" evidence="2">
    <location>
        <begin position="426"/>
        <end position="432"/>
    </location>
</feature>
<feature type="transmembrane region" description="Helical" evidence="2">
    <location>
        <begin position="433"/>
        <end position="453"/>
    </location>
</feature>
<feature type="topological domain" description="Cytoplasmic" evidence="2">
    <location>
        <begin position="454"/>
        <end position="515"/>
    </location>
</feature>
<feature type="region of interest" description="Disordered" evidence="3">
    <location>
        <begin position="489"/>
        <end position="515"/>
    </location>
</feature>
<feature type="glycosylation site" description="N-linked (GlcNAc...) asparagine" evidence="2">
    <location>
        <position position="84"/>
    </location>
</feature>
<feature type="glycosylation site" description="N-linked (GlcNAc...) asparagine" evidence="2">
    <location>
        <position position="87"/>
    </location>
</feature>
<feature type="glycosylation site" description="N-linked (GlcNAc...) asparagine" evidence="2">
    <location>
        <position position="92"/>
    </location>
</feature>
<feature type="glycosylation site" description="N-linked (GlcNAc...) asparagine" evidence="2">
    <location>
        <position position="306"/>
    </location>
</feature>
<feature type="sequence conflict" description="In Ref. 2." evidence="5" ref="2">
    <original>M</original>
    <variation>A</variation>
    <location>
        <position position="50"/>
    </location>
</feature>
<feature type="sequence conflict" description="In Ref. 2." evidence="5" ref="2">
    <original>V</original>
    <variation>I</variation>
    <location>
        <position position="164"/>
    </location>
</feature>
<feature type="sequence conflict" description="In Ref. 2." evidence="5" ref="2">
    <original>E</original>
    <variation>G</variation>
    <location>
        <position position="196"/>
    </location>
</feature>
<feature type="sequence conflict" description="In Ref. 2." evidence="5" ref="2">
    <original>A</original>
    <variation>V</variation>
    <location>
        <position position="226"/>
    </location>
</feature>
<protein>
    <recommendedName>
        <fullName>Vesicular acetylcholine transporter</fullName>
        <shortName>VAChT</shortName>
    </recommendedName>
    <alternativeName>
        <fullName>TorVAChT</fullName>
    </alternativeName>
</protein>
<comment type="function">
    <text evidence="1">Involved in acetylcholine transport into synaptic vesicles.</text>
</comment>
<comment type="subcellular location">
    <subcellularLocation>
        <location>Membrane</location>
        <topology>Multi-pass membrane protein</topology>
    </subcellularLocation>
</comment>
<comment type="tissue specificity">
    <text evidence="4">Electric lobe.</text>
</comment>
<comment type="domain">
    <text>Two classes of cysteines are involved in transport of acetylcholine. Binding of acetylcholine to VAChT involves one class of cysteine located at the cytoplasmic N-terminus and binding of vesamicol involves both. Organomercurial-mediated modification of two cysteine residues inhibits binding of vesamicol.</text>
</comment>
<comment type="similarity">
    <text evidence="5">Belongs to the major facilitator superfamily. Vesicular transporter family.</text>
</comment>
<evidence type="ECO:0000250" key="1"/>
<evidence type="ECO:0000255" key="2"/>
<evidence type="ECO:0000256" key="3">
    <source>
        <dbReference type="SAM" id="MobiDB-lite"/>
    </source>
</evidence>
<evidence type="ECO:0000269" key="4">
    <source>
    </source>
</evidence>
<evidence type="ECO:0000305" key="5"/>
<name>VACHT_TETCF</name>